<feature type="chain" id="PRO_0000159321" description="Uncharacterized protein YkgJ">
    <location>
        <begin position="1"/>
        <end position="109"/>
    </location>
</feature>
<protein>
    <recommendedName>
        <fullName>Uncharacterized protein YkgJ</fullName>
    </recommendedName>
</protein>
<keyword id="KW-0249">Electron transport</keyword>
<keyword id="KW-0408">Iron</keyword>
<keyword id="KW-0411">Iron-sulfur</keyword>
<keyword id="KW-0479">Metal-binding</keyword>
<keyword id="KW-1185">Reference proteome</keyword>
<keyword id="KW-0813">Transport</keyword>
<evidence type="ECO:0000305" key="1"/>
<reference key="1">
    <citation type="journal article" date="2001" name="Nature">
        <title>Genome sequence of enterohaemorrhagic Escherichia coli O157:H7.</title>
        <authorList>
            <person name="Perna N.T."/>
            <person name="Plunkett G. III"/>
            <person name="Burland V."/>
            <person name="Mau B."/>
            <person name="Glasner J.D."/>
            <person name="Rose D.J."/>
            <person name="Mayhew G.F."/>
            <person name="Evans P.S."/>
            <person name="Gregor J."/>
            <person name="Kirkpatrick H.A."/>
            <person name="Posfai G."/>
            <person name="Hackett J."/>
            <person name="Klink S."/>
            <person name="Boutin A."/>
            <person name="Shao Y."/>
            <person name="Miller L."/>
            <person name="Grotbeck E.J."/>
            <person name="Davis N.W."/>
            <person name="Lim A."/>
            <person name="Dimalanta E.T."/>
            <person name="Potamousis K."/>
            <person name="Apodaca J."/>
            <person name="Anantharaman T.S."/>
            <person name="Lin J."/>
            <person name="Yen G."/>
            <person name="Schwartz D.C."/>
            <person name="Welch R.A."/>
            <person name="Blattner F.R."/>
        </authorList>
    </citation>
    <scope>NUCLEOTIDE SEQUENCE [LARGE SCALE GENOMIC DNA]</scope>
    <source>
        <strain>O157:H7 / EDL933 / ATCC 700927 / EHEC</strain>
    </source>
</reference>
<reference key="2">
    <citation type="journal article" date="2001" name="DNA Res.">
        <title>Complete genome sequence of enterohemorrhagic Escherichia coli O157:H7 and genomic comparison with a laboratory strain K-12.</title>
        <authorList>
            <person name="Hayashi T."/>
            <person name="Makino K."/>
            <person name="Ohnishi M."/>
            <person name="Kurokawa K."/>
            <person name="Ishii K."/>
            <person name="Yokoyama K."/>
            <person name="Han C.-G."/>
            <person name="Ohtsubo E."/>
            <person name="Nakayama K."/>
            <person name="Murata T."/>
            <person name="Tanaka M."/>
            <person name="Tobe T."/>
            <person name="Iida T."/>
            <person name="Takami H."/>
            <person name="Honda T."/>
            <person name="Sasakawa C."/>
            <person name="Ogasawara N."/>
            <person name="Yasunaga T."/>
            <person name="Kuhara S."/>
            <person name="Shiba T."/>
            <person name="Hattori M."/>
            <person name="Shinagawa H."/>
        </authorList>
    </citation>
    <scope>NUCLEOTIDE SEQUENCE [LARGE SCALE GENOMIC DNA]</scope>
    <source>
        <strain>O157:H7 / Sakai / RIMD 0509952 / EHEC</strain>
    </source>
</reference>
<organism>
    <name type="scientific">Escherichia coli O157:H7</name>
    <dbReference type="NCBI Taxonomy" id="83334"/>
    <lineage>
        <taxon>Bacteria</taxon>
        <taxon>Pseudomonadati</taxon>
        <taxon>Pseudomonadota</taxon>
        <taxon>Gammaproteobacteria</taxon>
        <taxon>Enterobacterales</taxon>
        <taxon>Enterobacteriaceae</taxon>
        <taxon>Escherichia</taxon>
    </lineage>
</organism>
<name>YKGJ_ECO57</name>
<dbReference type="EMBL" id="AE005174">
    <property type="protein sequence ID" value="AAG54613.1"/>
    <property type="molecule type" value="Genomic_DNA"/>
</dbReference>
<dbReference type="EMBL" id="BA000007">
    <property type="protein sequence ID" value="BAB33741.1"/>
    <property type="molecule type" value="Genomic_DNA"/>
</dbReference>
<dbReference type="PIR" id="A85519">
    <property type="entry name" value="A85519"/>
</dbReference>
<dbReference type="PIR" id="F90668">
    <property type="entry name" value="F90668"/>
</dbReference>
<dbReference type="RefSeq" id="NP_308345.1">
    <property type="nucleotide sequence ID" value="NC_002695.1"/>
</dbReference>
<dbReference type="RefSeq" id="WP_001303809.1">
    <property type="nucleotide sequence ID" value="NZ_VOAI01000033.1"/>
</dbReference>
<dbReference type="STRING" id="155864.Z0354"/>
<dbReference type="KEGG" id="ece:Z0354"/>
<dbReference type="HOGENOM" id="CLU_123885_0_0_6"/>
<dbReference type="OMA" id="RVSFYWS"/>
<dbReference type="Proteomes" id="UP000000558">
    <property type="component" value="Chromosome"/>
</dbReference>
<dbReference type="Proteomes" id="UP000002519">
    <property type="component" value="Chromosome"/>
</dbReference>
<dbReference type="GO" id="GO:0051536">
    <property type="term" value="F:iron-sulfur cluster binding"/>
    <property type="evidence" value="ECO:0007669"/>
    <property type="project" value="UniProtKB-KW"/>
</dbReference>
<dbReference type="GO" id="GO:0046872">
    <property type="term" value="F:metal ion binding"/>
    <property type="evidence" value="ECO:0007669"/>
    <property type="project" value="UniProtKB-KW"/>
</dbReference>
<dbReference type="InterPro" id="IPR005358">
    <property type="entry name" value="Puta_zinc/iron-chelating_dom"/>
</dbReference>
<dbReference type="Pfam" id="PF03692">
    <property type="entry name" value="CxxCxxCC"/>
    <property type="match status" value="1"/>
</dbReference>
<gene>
    <name type="primary">ykgJ</name>
    <name type="ordered locus">Z0354</name>
    <name type="ordered locus">ECs0318</name>
</gene>
<sequence>MSNLNPCMTCGACCAFFRVSFYWAEADDAGGTIPARLTEQISPFHRCMSGTNQKNPRCIALAGTPGKNACCTIYKNRSSTCREFAMSGENGVVNEACNRARAKYGLTPL</sequence>
<comment type="similarity">
    <text evidence="1">To A.calcoaceticus putative ferredoxin.</text>
</comment>
<accession>P0AAM0</accession>
<accession>P71300</accession>
<proteinExistence type="predicted"/>